<comment type="similarity">
    <text evidence="1">Belongs to the bacterial ribosomal protein bL32 family.</text>
</comment>
<proteinExistence type="inferred from homology"/>
<gene>
    <name evidence="1" type="primary">rpmF</name>
    <name type="ordered locus">HPP12_0201</name>
</gene>
<protein>
    <recommendedName>
        <fullName evidence="1">Large ribosomal subunit protein bL32</fullName>
    </recommendedName>
    <alternativeName>
        <fullName evidence="2">50S ribosomal protein L32</fullName>
    </alternativeName>
</protein>
<sequence length="48" mass="5647">MAVPDRRVSKTRAAKRRTHYSVKLAKPVKAKDGTWKLPHHINKFTKEY</sequence>
<feature type="chain" id="PRO_1000120130" description="Large ribosomal subunit protein bL32">
    <location>
        <begin position="1"/>
        <end position="48"/>
    </location>
</feature>
<keyword id="KW-0687">Ribonucleoprotein</keyword>
<keyword id="KW-0689">Ribosomal protein</keyword>
<organism>
    <name type="scientific">Helicobacter pylori (strain P12)</name>
    <dbReference type="NCBI Taxonomy" id="570508"/>
    <lineage>
        <taxon>Bacteria</taxon>
        <taxon>Pseudomonadati</taxon>
        <taxon>Campylobacterota</taxon>
        <taxon>Epsilonproteobacteria</taxon>
        <taxon>Campylobacterales</taxon>
        <taxon>Helicobacteraceae</taxon>
        <taxon>Helicobacter</taxon>
    </lineage>
</organism>
<name>RL32_HELP2</name>
<reference key="1">
    <citation type="submission" date="2008-10" db="EMBL/GenBank/DDBJ databases">
        <title>The complete genome sequence of Helicobacter pylori strain P12.</title>
        <authorList>
            <person name="Fischer W."/>
            <person name="Windhager L."/>
            <person name="Karnholz A."/>
            <person name="Zeiller M."/>
            <person name="Zimmer R."/>
            <person name="Haas R."/>
        </authorList>
    </citation>
    <scope>NUCLEOTIDE SEQUENCE [LARGE SCALE GENOMIC DNA]</scope>
    <source>
        <strain>P12</strain>
    </source>
</reference>
<evidence type="ECO:0000255" key="1">
    <source>
        <dbReference type="HAMAP-Rule" id="MF_00340"/>
    </source>
</evidence>
<evidence type="ECO:0000305" key="2"/>
<dbReference type="EMBL" id="CP001217">
    <property type="protein sequence ID" value="ACJ07361.1"/>
    <property type="molecule type" value="Genomic_DNA"/>
</dbReference>
<dbReference type="SMR" id="B6JKD3"/>
<dbReference type="KEGG" id="hpp:HPP12_0201"/>
<dbReference type="HOGENOM" id="CLU_129084_1_2_7"/>
<dbReference type="Proteomes" id="UP000008198">
    <property type="component" value="Chromosome"/>
</dbReference>
<dbReference type="GO" id="GO:0015934">
    <property type="term" value="C:large ribosomal subunit"/>
    <property type="evidence" value="ECO:0007669"/>
    <property type="project" value="InterPro"/>
</dbReference>
<dbReference type="GO" id="GO:0003735">
    <property type="term" value="F:structural constituent of ribosome"/>
    <property type="evidence" value="ECO:0007669"/>
    <property type="project" value="InterPro"/>
</dbReference>
<dbReference type="GO" id="GO:0006412">
    <property type="term" value="P:translation"/>
    <property type="evidence" value="ECO:0007669"/>
    <property type="project" value="UniProtKB-UniRule"/>
</dbReference>
<dbReference type="HAMAP" id="MF_00340">
    <property type="entry name" value="Ribosomal_bL32"/>
    <property type="match status" value="1"/>
</dbReference>
<dbReference type="InterPro" id="IPR002677">
    <property type="entry name" value="Ribosomal_bL32"/>
</dbReference>
<dbReference type="InterPro" id="IPR011332">
    <property type="entry name" value="Ribosomal_zn-bd"/>
</dbReference>
<dbReference type="NCBIfam" id="TIGR01031">
    <property type="entry name" value="rpmF_bact"/>
    <property type="match status" value="1"/>
</dbReference>
<dbReference type="Pfam" id="PF01783">
    <property type="entry name" value="Ribosomal_L32p"/>
    <property type="match status" value="1"/>
</dbReference>
<dbReference type="SUPFAM" id="SSF57829">
    <property type="entry name" value="Zn-binding ribosomal proteins"/>
    <property type="match status" value="1"/>
</dbReference>
<accession>B6JKD3</accession>